<sequence length="333" mass="36301">MIDTTLPLTDIHRHLDGNIRPQTILELGRQYNISLPAQSLETLIPHVQVIANEPDLVSFLTKLDWGVKVLASLDACRRVAFENIEDAARNGLHYVELRFSPGYMAMAHKLPVAGVVEAVIDGVREGCRTFGVQAKLIGIMSRTFGEAACQQELEAFLAHRDQITALDLAGDELGFPGSLFLSHFNLARDAGWHITVHAGEAAGPESIWQAIRELGAERIGHGVKAIEDRALMDFLAEQQIGIESCLTSNIQTSTVAELAAHPLKTFLEHGIRAGINTDDPGVQGVDIIHEYTVAAPAAGLSREQIRQAQINGLEMAFLSAEEKRALREKVAAK</sequence>
<gene>
    <name evidence="1" type="primary">add</name>
    <name type="ordered locus">SbBS512_E1811</name>
</gene>
<evidence type="ECO:0000255" key="1">
    <source>
        <dbReference type="HAMAP-Rule" id="MF_00540"/>
    </source>
</evidence>
<reference key="1">
    <citation type="submission" date="2008-05" db="EMBL/GenBank/DDBJ databases">
        <title>Complete sequence of Shigella boydii serotype 18 strain BS512.</title>
        <authorList>
            <person name="Rasko D.A."/>
            <person name="Rosovitz M."/>
            <person name="Maurelli A.T."/>
            <person name="Myers G."/>
            <person name="Seshadri R."/>
            <person name="Cer R."/>
            <person name="Jiang L."/>
            <person name="Ravel J."/>
            <person name="Sebastian Y."/>
        </authorList>
    </citation>
    <scope>NUCLEOTIDE SEQUENCE [LARGE SCALE GENOMIC DNA]</scope>
    <source>
        <strain>CDC 3083-94 / BS512</strain>
    </source>
</reference>
<name>ADD_SHIB3</name>
<keyword id="KW-0378">Hydrolase</keyword>
<keyword id="KW-0479">Metal-binding</keyword>
<keyword id="KW-0546">Nucleotide metabolism</keyword>
<keyword id="KW-1185">Reference proteome</keyword>
<keyword id="KW-0862">Zinc</keyword>
<organism>
    <name type="scientific">Shigella boydii serotype 18 (strain CDC 3083-94 / BS512)</name>
    <dbReference type="NCBI Taxonomy" id="344609"/>
    <lineage>
        <taxon>Bacteria</taxon>
        <taxon>Pseudomonadati</taxon>
        <taxon>Pseudomonadota</taxon>
        <taxon>Gammaproteobacteria</taxon>
        <taxon>Enterobacterales</taxon>
        <taxon>Enterobacteriaceae</taxon>
        <taxon>Shigella</taxon>
    </lineage>
</organism>
<comment type="function">
    <text evidence="1">Catalyzes the hydrolytic deamination of adenosine and 2-deoxyadenosine.</text>
</comment>
<comment type="catalytic activity">
    <reaction evidence="1">
        <text>adenosine + H2O + H(+) = inosine + NH4(+)</text>
        <dbReference type="Rhea" id="RHEA:24408"/>
        <dbReference type="ChEBI" id="CHEBI:15377"/>
        <dbReference type="ChEBI" id="CHEBI:15378"/>
        <dbReference type="ChEBI" id="CHEBI:16335"/>
        <dbReference type="ChEBI" id="CHEBI:17596"/>
        <dbReference type="ChEBI" id="CHEBI:28938"/>
        <dbReference type="EC" id="3.5.4.4"/>
    </reaction>
    <physiologicalReaction direction="left-to-right" evidence="1">
        <dbReference type="Rhea" id="RHEA:24409"/>
    </physiologicalReaction>
</comment>
<comment type="catalytic activity">
    <reaction evidence="1">
        <text>2'-deoxyadenosine + H2O + H(+) = 2'-deoxyinosine + NH4(+)</text>
        <dbReference type="Rhea" id="RHEA:28190"/>
        <dbReference type="ChEBI" id="CHEBI:15377"/>
        <dbReference type="ChEBI" id="CHEBI:15378"/>
        <dbReference type="ChEBI" id="CHEBI:17256"/>
        <dbReference type="ChEBI" id="CHEBI:28938"/>
        <dbReference type="ChEBI" id="CHEBI:28997"/>
        <dbReference type="EC" id="3.5.4.4"/>
    </reaction>
    <physiologicalReaction direction="left-to-right" evidence="1">
        <dbReference type="Rhea" id="RHEA:28191"/>
    </physiologicalReaction>
</comment>
<comment type="cofactor">
    <cofactor evidence="1">
        <name>Zn(2+)</name>
        <dbReference type="ChEBI" id="CHEBI:29105"/>
    </cofactor>
    <text evidence="1">Binds 1 zinc ion per subunit.</text>
</comment>
<comment type="similarity">
    <text evidence="1">Belongs to the metallo-dependent hydrolases superfamily. Adenosine and AMP deaminases family. Adenosine deaminase subfamily.</text>
</comment>
<feature type="chain" id="PRO_1000128869" description="Adenosine deaminase">
    <location>
        <begin position="1"/>
        <end position="333"/>
    </location>
</feature>
<feature type="active site" description="Proton donor" evidence="1">
    <location>
        <position position="200"/>
    </location>
</feature>
<feature type="binding site" evidence="1">
    <location>
        <position position="12"/>
    </location>
    <ligand>
        <name>Zn(2+)</name>
        <dbReference type="ChEBI" id="CHEBI:29105"/>
        <note>catalytic</note>
    </ligand>
</feature>
<feature type="binding site" evidence="1">
    <location>
        <position position="14"/>
    </location>
    <ligand>
        <name>substrate</name>
    </ligand>
</feature>
<feature type="binding site" evidence="1">
    <location>
        <position position="14"/>
    </location>
    <ligand>
        <name>Zn(2+)</name>
        <dbReference type="ChEBI" id="CHEBI:29105"/>
        <note>catalytic</note>
    </ligand>
</feature>
<feature type="binding site" evidence="1">
    <location>
        <position position="16"/>
    </location>
    <ligand>
        <name>substrate</name>
    </ligand>
</feature>
<feature type="binding site" evidence="1">
    <location>
        <position position="170"/>
    </location>
    <ligand>
        <name>substrate</name>
    </ligand>
</feature>
<feature type="binding site" evidence="1">
    <location>
        <position position="197"/>
    </location>
    <ligand>
        <name>Zn(2+)</name>
        <dbReference type="ChEBI" id="CHEBI:29105"/>
        <note>catalytic</note>
    </ligand>
</feature>
<feature type="binding site" evidence="1">
    <location>
        <position position="278"/>
    </location>
    <ligand>
        <name>Zn(2+)</name>
        <dbReference type="ChEBI" id="CHEBI:29105"/>
        <note>catalytic</note>
    </ligand>
</feature>
<feature type="binding site" evidence="1">
    <location>
        <position position="279"/>
    </location>
    <ligand>
        <name>substrate</name>
    </ligand>
</feature>
<feature type="site" description="Important for catalytic activity" evidence="1">
    <location>
        <position position="221"/>
    </location>
</feature>
<protein>
    <recommendedName>
        <fullName evidence="1">Adenosine deaminase</fullName>
        <ecNumber evidence="1">3.5.4.4</ecNumber>
    </recommendedName>
    <alternativeName>
        <fullName evidence="1">Adenosine aminohydrolase</fullName>
    </alternativeName>
</protein>
<accession>B2U2C1</accession>
<dbReference type="EC" id="3.5.4.4" evidence="1"/>
<dbReference type="EMBL" id="CP001063">
    <property type="protein sequence ID" value="ACD09638.1"/>
    <property type="molecule type" value="Genomic_DNA"/>
</dbReference>
<dbReference type="RefSeq" id="WP_000567500.1">
    <property type="nucleotide sequence ID" value="NC_010658.1"/>
</dbReference>
<dbReference type="SMR" id="B2U2C1"/>
<dbReference type="STRING" id="344609.SbBS512_E1811"/>
<dbReference type="KEGG" id="sbc:SbBS512_E1811"/>
<dbReference type="HOGENOM" id="CLU_039228_0_2_6"/>
<dbReference type="Proteomes" id="UP000001030">
    <property type="component" value="Chromosome"/>
</dbReference>
<dbReference type="GO" id="GO:0005829">
    <property type="term" value="C:cytosol"/>
    <property type="evidence" value="ECO:0007669"/>
    <property type="project" value="TreeGrafter"/>
</dbReference>
<dbReference type="GO" id="GO:0046936">
    <property type="term" value="F:2'-deoxyadenosine deaminase activity"/>
    <property type="evidence" value="ECO:0007669"/>
    <property type="project" value="RHEA"/>
</dbReference>
<dbReference type="GO" id="GO:0004000">
    <property type="term" value="F:adenosine deaminase activity"/>
    <property type="evidence" value="ECO:0007669"/>
    <property type="project" value="UniProtKB-UniRule"/>
</dbReference>
<dbReference type="GO" id="GO:0008270">
    <property type="term" value="F:zinc ion binding"/>
    <property type="evidence" value="ECO:0007669"/>
    <property type="project" value="UniProtKB-UniRule"/>
</dbReference>
<dbReference type="GO" id="GO:0006154">
    <property type="term" value="P:adenosine catabolic process"/>
    <property type="evidence" value="ECO:0007669"/>
    <property type="project" value="TreeGrafter"/>
</dbReference>
<dbReference type="GO" id="GO:0043103">
    <property type="term" value="P:hypoxanthine salvage"/>
    <property type="evidence" value="ECO:0007669"/>
    <property type="project" value="TreeGrafter"/>
</dbReference>
<dbReference type="GO" id="GO:0046103">
    <property type="term" value="P:inosine biosynthetic process"/>
    <property type="evidence" value="ECO:0007669"/>
    <property type="project" value="TreeGrafter"/>
</dbReference>
<dbReference type="GO" id="GO:0009117">
    <property type="term" value="P:nucleotide metabolic process"/>
    <property type="evidence" value="ECO:0007669"/>
    <property type="project" value="UniProtKB-KW"/>
</dbReference>
<dbReference type="GO" id="GO:0009168">
    <property type="term" value="P:purine ribonucleoside monophosphate biosynthetic process"/>
    <property type="evidence" value="ECO:0007669"/>
    <property type="project" value="UniProtKB-UniRule"/>
</dbReference>
<dbReference type="CDD" id="cd01320">
    <property type="entry name" value="ADA"/>
    <property type="match status" value="1"/>
</dbReference>
<dbReference type="FunFam" id="3.20.20.140:FF:000009">
    <property type="entry name" value="Adenosine deaminase"/>
    <property type="match status" value="1"/>
</dbReference>
<dbReference type="Gene3D" id="3.20.20.140">
    <property type="entry name" value="Metal-dependent hydrolases"/>
    <property type="match status" value="1"/>
</dbReference>
<dbReference type="HAMAP" id="MF_00540">
    <property type="entry name" value="A_deaminase"/>
    <property type="match status" value="1"/>
</dbReference>
<dbReference type="InterPro" id="IPR028893">
    <property type="entry name" value="A_deaminase"/>
</dbReference>
<dbReference type="InterPro" id="IPR001365">
    <property type="entry name" value="A_deaminase_dom"/>
</dbReference>
<dbReference type="InterPro" id="IPR006330">
    <property type="entry name" value="Ado/ade_deaminase"/>
</dbReference>
<dbReference type="InterPro" id="IPR032466">
    <property type="entry name" value="Metal_Hydrolase"/>
</dbReference>
<dbReference type="NCBIfam" id="TIGR01430">
    <property type="entry name" value="aden_deam"/>
    <property type="match status" value="1"/>
</dbReference>
<dbReference type="NCBIfam" id="NF006846">
    <property type="entry name" value="PRK09358.1-1"/>
    <property type="match status" value="1"/>
</dbReference>
<dbReference type="PANTHER" id="PTHR11409">
    <property type="entry name" value="ADENOSINE DEAMINASE"/>
    <property type="match status" value="1"/>
</dbReference>
<dbReference type="PANTHER" id="PTHR11409:SF43">
    <property type="entry name" value="ADENOSINE DEAMINASE"/>
    <property type="match status" value="1"/>
</dbReference>
<dbReference type="Pfam" id="PF00962">
    <property type="entry name" value="A_deaminase"/>
    <property type="match status" value="1"/>
</dbReference>
<dbReference type="SUPFAM" id="SSF51556">
    <property type="entry name" value="Metallo-dependent hydrolases"/>
    <property type="match status" value="1"/>
</dbReference>
<proteinExistence type="inferred from homology"/>